<organism>
    <name type="scientific">Gallus gallus</name>
    <name type="common">Chicken</name>
    <dbReference type="NCBI Taxonomy" id="9031"/>
    <lineage>
        <taxon>Eukaryota</taxon>
        <taxon>Metazoa</taxon>
        <taxon>Chordata</taxon>
        <taxon>Craniata</taxon>
        <taxon>Vertebrata</taxon>
        <taxon>Euteleostomi</taxon>
        <taxon>Archelosauria</taxon>
        <taxon>Archosauria</taxon>
        <taxon>Dinosauria</taxon>
        <taxon>Saurischia</taxon>
        <taxon>Theropoda</taxon>
        <taxon>Coelurosauria</taxon>
        <taxon>Aves</taxon>
        <taxon>Neognathae</taxon>
        <taxon>Galloanserae</taxon>
        <taxon>Galliformes</taxon>
        <taxon>Phasianidae</taxon>
        <taxon>Phasianinae</taxon>
        <taxon>Gallus</taxon>
    </lineage>
</organism>
<dbReference type="EMBL" id="AF177985">
    <property type="protein sequence ID" value="AAF25809.1"/>
    <property type="molecule type" value="mRNA"/>
</dbReference>
<dbReference type="EMBL" id="AF177986">
    <property type="protein sequence ID" value="AAF25810.1"/>
    <property type="molecule type" value="mRNA"/>
</dbReference>
<dbReference type="RefSeq" id="NP_001001772.1">
    <property type="nucleotide sequence ID" value="NM_001001772.1"/>
</dbReference>
<dbReference type="SMR" id="Q9IAL7"/>
<dbReference type="FunCoup" id="Q9IAL7">
    <property type="interactions" value="111"/>
</dbReference>
<dbReference type="STRING" id="9031.ENSGALP00000060976"/>
<dbReference type="GlyCosmos" id="Q9IAL7">
    <property type="glycosylation" value="1 site, No reported glycans"/>
</dbReference>
<dbReference type="GlyGen" id="Q9IAL7">
    <property type="glycosylation" value="2 sites"/>
</dbReference>
<dbReference type="PaxDb" id="9031-ENSGALP00000037460"/>
<dbReference type="GeneID" id="414891"/>
<dbReference type="KEGG" id="gga:414891"/>
<dbReference type="CTD" id="25769"/>
<dbReference type="VEuPathDB" id="HostDB:geneid_414891"/>
<dbReference type="eggNOG" id="KOG1307">
    <property type="taxonomic scope" value="Eukaryota"/>
</dbReference>
<dbReference type="InParanoid" id="Q9IAL7"/>
<dbReference type="OrthoDB" id="2127281at2759"/>
<dbReference type="PhylomeDB" id="Q9IAL7"/>
<dbReference type="PRO" id="PR:Q9IAL7"/>
<dbReference type="Proteomes" id="UP000000539">
    <property type="component" value="Unassembled WGS sequence"/>
</dbReference>
<dbReference type="GO" id="GO:0001917">
    <property type="term" value="C:photoreceptor inner segment"/>
    <property type="evidence" value="ECO:0000314"/>
    <property type="project" value="ARUK-UCL"/>
</dbReference>
<dbReference type="GO" id="GO:0005886">
    <property type="term" value="C:plasma membrane"/>
    <property type="evidence" value="ECO:0000318"/>
    <property type="project" value="GO_Central"/>
</dbReference>
<dbReference type="GO" id="GO:0005262">
    <property type="term" value="F:calcium channel activity"/>
    <property type="evidence" value="ECO:0000318"/>
    <property type="project" value="GO_Central"/>
</dbReference>
<dbReference type="GO" id="GO:0008273">
    <property type="term" value="F:calcium, potassium:sodium antiporter activity"/>
    <property type="evidence" value="ECO:0000316"/>
    <property type="project" value="ARUK-UCL"/>
</dbReference>
<dbReference type="GO" id="GO:0015293">
    <property type="term" value="F:symporter activity"/>
    <property type="evidence" value="ECO:0007669"/>
    <property type="project" value="UniProtKB-KW"/>
</dbReference>
<dbReference type="GO" id="GO:0098703">
    <property type="term" value="P:calcium ion import across plasma membrane"/>
    <property type="evidence" value="ECO:0000314"/>
    <property type="project" value="ARUK-UCL"/>
</dbReference>
<dbReference type="GO" id="GO:0070588">
    <property type="term" value="P:calcium ion transmembrane transport"/>
    <property type="evidence" value="ECO:0000318"/>
    <property type="project" value="GO_Central"/>
</dbReference>
<dbReference type="GO" id="GO:0006874">
    <property type="term" value="P:intracellular calcium ion homeostasis"/>
    <property type="evidence" value="ECO:0000318"/>
    <property type="project" value="GO_Central"/>
</dbReference>
<dbReference type="GO" id="GO:0060292">
    <property type="term" value="P:long-term synaptic depression"/>
    <property type="evidence" value="ECO:0000318"/>
    <property type="project" value="GO_Central"/>
</dbReference>
<dbReference type="GO" id="GO:0060291">
    <property type="term" value="P:long-term synaptic potentiation"/>
    <property type="evidence" value="ECO:0000318"/>
    <property type="project" value="GO_Central"/>
</dbReference>
<dbReference type="FunFam" id="1.20.1420.30:FF:000002">
    <property type="entry name" value="Sodium/potassium/calcium exchanger 2 isoform 1"/>
    <property type="match status" value="1"/>
</dbReference>
<dbReference type="FunFam" id="1.20.1420.30:FF:000004">
    <property type="entry name" value="Sodium/potassium/calcium exchanger 2 isoform 1"/>
    <property type="match status" value="1"/>
</dbReference>
<dbReference type="Gene3D" id="1.20.1420.30">
    <property type="entry name" value="NCX, central ion-binding region"/>
    <property type="match status" value="2"/>
</dbReference>
<dbReference type="InterPro" id="IPR004481">
    <property type="entry name" value="K/Na/Ca-exchanger"/>
</dbReference>
<dbReference type="InterPro" id="IPR004837">
    <property type="entry name" value="NaCa_Exmemb"/>
</dbReference>
<dbReference type="InterPro" id="IPR044880">
    <property type="entry name" value="NCX_ion-bd_dom_sf"/>
</dbReference>
<dbReference type="NCBIfam" id="TIGR00367">
    <property type="entry name" value="calcium/sodium antiporter"/>
    <property type="match status" value="1"/>
</dbReference>
<dbReference type="PANTHER" id="PTHR10846">
    <property type="entry name" value="SODIUM/POTASSIUM/CALCIUM EXCHANGER"/>
    <property type="match status" value="1"/>
</dbReference>
<dbReference type="PANTHER" id="PTHR10846:SF41">
    <property type="entry name" value="SODIUM_POTASSIUM_CALCIUM EXCHANGER 2"/>
    <property type="match status" value="1"/>
</dbReference>
<dbReference type="Pfam" id="PF01699">
    <property type="entry name" value="Na_Ca_ex"/>
    <property type="match status" value="2"/>
</dbReference>
<evidence type="ECO:0000250" key="1">
    <source>
        <dbReference type="UniProtKB" id="Q8BUN9"/>
    </source>
</evidence>
<evidence type="ECO:0000250" key="2">
    <source>
        <dbReference type="UniProtKB" id="Q9UI40"/>
    </source>
</evidence>
<evidence type="ECO:0000255" key="3"/>
<evidence type="ECO:0000256" key="4">
    <source>
        <dbReference type="SAM" id="MobiDB-lite"/>
    </source>
</evidence>
<evidence type="ECO:0000269" key="5">
    <source>
    </source>
</evidence>
<evidence type="ECO:0000303" key="6">
    <source>
    </source>
</evidence>
<evidence type="ECO:0000305" key="7"/>
<evidence type="ECO:0000305" key="8">
    <source>
    </source>
</evidence>
<accession>Q9IAL7</accession>
<accession>Q9IAL6</accession>
<sequence length="651" mass="72696">MALCKKTVGSVLEEWCLNEPLFGCKRHQNVRKKLRLIRIIGLLVSVVAISTFSLSISAFFKMETHSTVLASSLESQKLVHGHQRTLLDFMEQNEGSTPDSPTSMKHEAEHDNATEEHSKGEYPEDLFSLEERRKGAVILHVIGMIYMFIALAIVCDEFFVPSLTVITEKLSISDDVAGATFMAAGGSAPELFTSLIGVFISHSNVGIGTIVGSAVFNILFVIGMCALFSREILNLTWWPLFRDVSFYIVDLILLIIFFLDNLIMWWESLTLLTAYFCYVTFMKFNVQVEEWVKKVLNRNKVEKATTGDAEGKSPTAGDKDDQTLTTKPRLQRGGSSASLHNSLMRNSIFQLMIHTLDPLAEELGSYGNLKYYDTMTEEGKFKERASILHKIAKKKCQVEDSERQNGAANHEKGAKVEVAVTPPSDSGPVQNGIAHNVDEENEEDEDQPLSLAWPDTPRKQLTYLLVLPIVFPLWVSLPDVRNPRSRKFFPITFFGSISWIAFFSYLMVWWAHQVGETIGISEEIMGLTILAAGTSIPDLITSVIVARKGLGDMAVSSSVGSNIFDITVGLPLPWLLYAVINNFSPVTVSSNGLFCAIVLLFIMLLFVILSIAFCKWRMNKFLGFLMFGLYFVFLIVSVLLEDKVIQCPVSI</sequence>
<feature type="chain" id="PRO_0000019369" description="Sodium/potassium/calcium exchanger 2">
    <location>
        <begin position="1"/>
        <end position="651"/>
    </location>
</feature>
<feature type="topological domain" description="Cytoplasmic" evidence="3">
    <location>
        <begin position="1"/>
        <end position="38"/>
    </location>
</feature>
<feature type="transmembrane region" description="Helical" evidence="3">
    <location>
        <begin position="39"/>
        <end position="59"/>
    </location>
</feature>
<feature type="topological domain" description="Extracellular" evidence="3">
    <location>
        <begin position="60"/>
        <end position="134"/>
    </location>
</feature>
<feature type="transmembrane region" description="Helical" evidence="3">
    <location>
        <begin position="135"/>
        <end position="155"/>
    </location>
</feature>
<feature type="topological domain" description="Cytoplasmic" evidence="3">
    <location>
        <begin position="156"/>
        <end position="179"/>
    </location>
</feature>
<feature type="transmembrane region" description="Helical" evidence="3">
    <location>
        <begin position="180"/>
        <end position="200"/>
    </location>
</feature>
<feature type="topological domain" description="Extracellular" evidence="3">
    <location>
        <begin position="201"/>
        <end position="206"/>
    </location>
</feature>
<feature type="transmembrane region" description="Helical" evidence="3">
    <location>
        <begin position="207"/>
        <end position="227"/>
    </location>
</feature>
<feature type="topological domain" description="Cytoplasmic" evidence="3">
    <location>
        <begin position="228"/>
        <end position="245"/>
    </location>
</feature>
<feature type="transmembrane region" description="Helical" evidence="3">
    <location>
        <begin position="246"/>
        <end position="266"/>
    </location>
</feature>
<feature type="topological domain" description="Extracellular" evidence="3">
    <location>
        <begin position="267"/>
        <end position="459"/>
    </location>
</feature>
<feature type="transmembrane region" description="Helical" evidence="3">
    <location>
        <begin position="460"/>
        <end position="480"/>
    </location>
</feature>
<feature type="topological domain" description="Cytoplasmic" evidence="3">
    <location>
        <begin position="481"/>
        <end position="487"/>
    </location>
</feature>
<feature type="transmembrane region" description="Helical" evidence="3">
    <location>
        <begin position="488"/>
        <end position="508"/>
    </location>
</feature>
<feature type="topological domain" description="Extracellular" evidence="3">
    <location>
        <begin position="509"/>
        <end position="523"/>
    </location>
</feature>
<feature type="transmembrane region" description="Helical" evidence="3">
    <location>
        <begin position="524"/>
        <end position="544"/>
    </location>
</feature>
<feature type="topological domain" description="Cytoplasmic" evidence="3">
    <location>
        <begin position="545"/>
        <end position="562"/>
    </location>
</feature>
<feature type="transmembrane region" description="Helical" evidence="3">
    <location>
        <begin position="563"/>
        <end position="583"/>
    </location>
</feature>
<feature type="topological domain" description="Extracellular" evidence="3">
    <location>
        <begin position="584"/>
        <end position="592"/>
    </location>
</feature>
<feature type="transmembrane region" description="Helical" evidence="3">
    <location>
        <begin position="593"/>
        <end position="613"/>
    </location>
</feature>
<feature type="topological domain" description="Cytoplasmic" evidence="3">
    <location>
        <begin position="614"/>
        <end position="620"/>
    </location>
</feature>
<feature type="transmembrane region" description="Helical" evidence="3">
    <location>
        <begin position="621"/>
        <end position="641"/>
    </location>
</feature>
<feature type="topological domain" description="Extracellular" evidence="3">
    <location>
        <begin position="642"/>
        <end position="651"/>
    </location>
</feature>
<feature type="repeat" description="Alpha-1">
    <location>
        <begin position="176"/>
        <end position="216"/>
    </location>
</feature>
<feature type="repeat" description="Alpha-2">
    <location>
        <begin position="531"/>
        <end position="562"/>
    </location>
</feature>
<feature type="region of interest" description="Disordered" evidence="4">
    <location>
        <begin position="92"/>
        <end position="123"/>
    </location>
</feature>
<feature type="region of interest" description="Disordered" evidence="4">
    <location>
        <begin position="304"/>
        <end position="338"/>
    </location>
</feature>
<feature type="compositionally biased region" description="Polar residues" evidence="4">
    <location>
        <begin position="93"/>
        <end position="103"/>
    </location>
</feature>
<feature type="compositionally biased region" description="Basic and acidic residues" evidence="4">
    <location>
        <begin position="104"/>
        <end position="122"/>
    </location>
</feature>
<feature type="compositionally biased region" description="Basic and acidic residues" evidence="4">
    <location>
        <begin position="304"/>
        <end position="322"/>
    </location>
</feature>
<feature type="compositionally biased region" description="Polar residues" evidence="4">
    <location>
        <begin position="323"/>
        <end position="338"/>
    </location>
</feature>
<feature type="glycosylation site" description="N-linked (GlcNAc...) asparagine" evidence="3">
    <location>
        <position position="112"/>
    </location>
</feature>
<feature type="splice variant" id="VSP_006166" description="In isoform IIB." evidence="6">
    <location>
        <begin position="362"/>
        <end position="378"/>
    </location>
</feature>
<reference key="1">
    <citation type="journal article" date="2000" name="J. Neurosci.">
        <title>Molecular cloning and functional expression of the potassium-dependent sodium-calcium exchanger from human and chicken retinal cone photoreceptors.</title>
        <authorList>
            <person name="Prinsen C.F.M."/>
            <person name="Szerencsei R.T."/>
            <person name="Schnetkamp P.P.M."/>
        </authorList>
    </citation>
    <scope>NUCLEOTIDE SEQUENCE [MRNA] (ISOFORMS IIA AND IIB)</scope>
    <scope>FUNCTION</scope>
    <scope>TRANSPORTER ACTIVITY</scope>
    <scope>TISSUE SPECIFICITY</scope>
    <source>
        <tissue>Retina</tissue>
    </source>
</reference>
<protein>
    <recommendedName>
        <fullName>Sodium/potassium/calcium exchanger 2</fullName>
    </recommendedName>
    <alternativeName>
        <fullName>Na(+)/K(+)/Ca(2+)-exchange protein 2</fullName>
    </alternativeName>
    <alternativeName>
        <fullName>Retinal cone Na-Ca+K exchanger</fullName>
    </alternativeName>
    <alternativeName>
        <fullName>Solute carrier family 24 member 2</fullName>
    </alternativeName>
</protein>
<name>NCKX2_CHICK</name>
<keyword id="KW-0025">Alternative splicing</keyword>
<keyword id="KW-0050">Antiport</keyword>
<keyword id="KW-0106">Calcium</keyword>
<keyword id="KW-0109">Calcium transport</keyword>
<keyword id="KW-1003">Cell membrane</keyword>
<keyword id="KW-0325">Glycoprotein</keyword>
<keyword id="KW-0406">Ion transport</keyword>
<keyword id="KW-0472">Membrane</keyword>
<keyword id="KW-0630">Potassium</keyword>
<keyword id="KW-0633">Potassium transport</keyword>
<keyword id="KW-1185">Reference proteome</keyword>
<keyword id="KW-0677">Repeat</keyword>
<keyword id="KW-0915">Sodium</keyword>
<keyword id="KW-0739">Sodium transport</keyword>
<keyword id="KW-0769">Symport</keyword>
<keyword id="KW-0812">Transmembrane</keyword>
<keyword id="KW-1133">Transmembrane helix</keyword>
<keyword id="KW-0813">Transport</keyword>
<comment type="function">
    <text evidence="1 5">Calcium, potassium:sodium antiporter that transports 1 Ca(2+) and 1 K(+) in exchange for 4 Na(+) (PubMed:10662833). Required for learming and memory by regulating neuronal Ca(2+), which is essential for the development of synaptic plasticity (By similarity).</text>
</comment>
<comment type="catalytic activity">
    <reaction evidence="8">
        <text>Ca(2+)(out) + K(+)(out) + 4 Na(+)(in) = Ca(2+)(in) + K(+)(in) + 4 Na(+)(out)</text>
        <dbReference type="Rhea" id="RHEA:69967"/>
        <dbReference type="ChEBI" id="CHEBI:29101"/>
        <dbReference type="ChEBI" id="CHEBI:29103"/>
        <dbReference type="ChEBI" id="CHEBI:29108"/>
    </reaction>
</comment>
<comment type="subcellular location">
    <subcellularLocation>
        <location evidence="2">Cell membrane</location>
        <topology evidence="3">Multi-pass membrane protein</topology>
    </subcellularLocation>
</comment>
<comment type="alternative products">
    <event type="alternative splicing"/>
    <isoform>
        <id>Q9IAL7-1</id>
        <name>IIA</name>
        <sequence type="displayed"/>
    </isoform>
    <isoform>
        <id>Q9IAL7-2</id>
        <name>IIB</name>
        <sequence type="described" ref="VSP_006166"/>
    </isoform>
</comment>
<comment type="tissue specificity">
    <text evidence="5">Retinal cones (PubMed:10662833). Found in the cone inner segment layer and in a subpopulation of ganglion cells (PubMed:10662833).</text>
</comment>
<comment type="similarity">
    <text evidence="7">Belongs to the Ca(2+):cation antiporter (CaCA) (TC 2.A.19) family. SLC24A subfamily.</text>
</comment>
<proteinExistence type="evidence at transcript level"/>
<gene>
    <name type="primary">SLC24A2</name>
    <name type="synonym">NCKX2</name>
</gene>